<dbReference type="EMBL" id="CR857182">
    <property type="protein sequence ID" value="CAH89482.1"/>
    <property type="molecule type" value="mRNA"/>
</dbReference>
<dbReference type="RefSeq" id="NP_001129015.1">
    <property type="nucleotide sequence ID" value="NM_001135543.1"/>
</dbReference>
<dbReference type="SMR" id="Q5RFH5"/>
<dbReference type="STRING" id="9601.ENSPPYP00000009251"/>
<dbReference type="GeneID" id="100190855"/>
<dbReference type="KEGG" id="pon:100190855"/>
<dbReference type="CTD" id="6827"/>
<dbReference type="eggNOG" id="KOG3490">
    <property type="taxonomic scope" value="Eukaryota"/>
</dbReference>
<dbReference type="InParanoid" id="Q5RFH5"/>
<dbReference type="OrthoDB" id="248751at2759"/>
<dbReference type="Proteomes" id="UP000001595">
    <property type="component" value="Unplaced"/>
</dbReference>
<dbReference type="GO" id="GO:0032044">
    <property type="term" value="C:DSIF complex"/>
    <property type="evidence" value="ECO:0000250"/>
    <property type="project" value="UniProtKB"/>
</dbReference>
<dbReference type="GO" id="GO:0000993">
    <property type="term" value="F:RNA polymerase II complex binding"/>
    <property type="evidence" value="ECO:0007669"/>
    <property type="project" value="TreeGrafter"/>
</dbReference>
<dbReference type="GO" id="GO:0008270">
    <property type="term" value="F:zinc ion binding"/>
    <property type="evidence" value="ECO:0007669"/>
    <property type="project" value="UniProtKB-KW"/>
</dbReference>
<dbReference type="GO" id="GO:0006355">
    <property type="term" value="P:regulation of DNA-templated transcription"/>
    <property type="evidence" value="ECO:0007669"/>
    <property type="project" value="InterPro"/>
</dbReference>
<dbReference type="GO" id="GO:0140673">
    <property type="term" value="P:transcription elongation-coupled chromatin remodeling"/>
    <property type="evidence" value="ECO:0007669"/>
    <property type="project" value="InterPro"/>
</dbReference>
<dbReference type="CDD" id="cd07973">
    <property type="entry name" value="Spt4"/>
    <property type="match status" value="1"/>
</dbReference>
<dbReference type="FunFam" id="3.30.40.210:FF:000006">
    <property type="entry name" value="Transcription elongation factor SPT4"/>
    <property type="match status" value="1"/>
</dbReference>
<dbReference type="Gene3D" id="3.30.40.210">
    <property type="match status" value="1"/>
</dbReference>
<dbReference type="InterPro" id="IPR029040">
    <property type="entry name" value="RPABC4/Spt4"/>
</dbReference>
<dbReference type="InterPro" id="IPR009287">
    <property type="entry name" value="Spt4"/>
</dbReference>
<dbReference type="InterPro" id="IPR022800">
    <property type="entry name" value="Spt4/RpoE2_Znf"/>
</dbReference>
<dbReference type="InterPro" id="IPR038510">
    <property type="entry name" value="Spt4_sf"/>
</dbReference>
<dbReference type="PANTHER" id="PTHR12882">
    <property type="entry name" value="SUPPRESSOR OF TY 4"/>
    <property type="match status" value="1"/>
</dbReference>
<dbReference type="PANTHER" id="PTHR12882:SF1">
    <property type="entry name" value="TRANSCRIPTION ELONGATION FACTOR SPT4"/>
    <property type="match status" value="1"/>
</dbReference>
<dbReference type="Pfam" id="PF06093">
    <property type="entry name" value="Spt4"/>
    <property type="match status" value="1"/>
</dbReference>
<dbReference type="PIRSF" id="PIRSF025023">
    <property type="entry name" value="Spt4"/>
    <property type="match status" value="1"/>
</dbReference>
<dbReference type="SMART" id="SM01389">
    <property type="entry name" value="Spt4"/>
    <property type="match status" value="1"/>
</dbReference>
<dbReference type="SUPFAM" id="SSF63393">
    <property type="entry name" value="RNA polymerase subunits"/>
    <property type="match status" value="1"/>
</dbReference>
<proteinExistence type="inferred from homology"/>
<feature type="initiator methionine" description="Removed" evidence="2">
    <location>
        <position position="1"/>
    </location>
</feature>
<feature type="chain" id="PRO_0000210329" description="Transcription elongation factor SPT4">
    <location>
        <begin position="2"/>
        <end position="117"/>
    </location>
</feature>
<feature type="zinc finger region" description="C4-type" evidence="3">
    <location>
        <begin position="16"/>
        <end position="36"/>
    </location>
</feature>
<feature type="region of interest" description="Interaction with SUPT5H" evidence="1">
    <location>
        <begin position="2"/>
        <end position="40"/>
    </location>
</feature>
<feature type="binding site" evidence="2">
    <location>
        <position position="16"/>
    </location>
    <ligand>
        <name>Zn(2+)</name>
        <dbReference type="ChEBI" id="CHEBI:29105"/>
    </ligand>
</feature>
<feature type="binding site" evidence="2">
    <location>
        <position position="19"/>
    </location>
    <ligand>
        <name>Zn(2+)</name>
        <dbReference type="ChEBI" id="CHEBI:29105"/>
    </ligand>
</feature>
<feature type="binding site" evidence="2">
    <location>
        <position position="33"/>
    </location>
    <ligand>
        <name>Zn(2+)</name>
        <dbReference type="ChEBI" id="CHEBI:29105"/>
    </ligand>
</feature>
<feature type="binding site" evidence="2">
    <location>
        <position position="36"/>
    </location>
    <ligand>
        <name>Zn(2+)</name>
        <dbReference type="ChEBI" id="CHEBI:29105"/>
    </ligand>
</feature>
<feature type="modified residue" description="N-acetylalanine" evidence="2">
    <location>
        <position position="2"/>
    </location>
</feature>
<protein>
    <recommendedName>
        <fullName>Transcription elongation factor SPT4</fullName>
    </recommendedName>
    <alternativeName>
        <fullName>DRB sensitivity-inducing factor small subunit</fullName>
        <shortName>DSIF small subunit</shortName>
    </alternativeName>
</protein>
<organism>
    <name type="scientific">Pongo abelii</name>
    <name type="common">Sumatran orangutan</name>
    <name type="synonym">Pongo pygmaeus abelii</name>
    <dbReference type="NCBI Taxonomy" id="9601"/>
    <lineage>
        <taxon>Eukaryota</taxon>
        <taxon>Metazoa</taxon>
        <taxon>Chordata</taxon>
        <taxon>Craniata</taxon>
        <taxon>Vertebrata</taxon>
        <taxon>Euteleostomi</taxon>
        <taxon>Mammalia</taxon>
        <taxon>Eutheria</taxon>
        <taxon>Euarchontoglires</taxon>
        <taxon>Primates</taxon>
        <taxon>Haplorrhini</taxon>
        <taxon>Catarrhini</taxon>
        <taxon>Hominidae</taxon>
        <taxon>Pongo</taxon>
    </lineage>
</organism>
<name>SPT4H_PONAB</name>
<reference key="1">
    <citation type="submission" date="2004-11" db="EMBL/GenBank/DDBJ databases">
        <authorList>
            <consortium name="The German cDNA consortium"/>
        </authorList>
    </citation>
    <scope>NUCLEOTIDE SEQUENCE [LARGE SCALE MRNA]</scope>
    <source>
        <tissue>Heart</tissue>
    </source>
</reference>
<keyword id="KW-0007">Acetylation</keyword>
<keyword id="KW-0010">Activator</keyword>
<keyword id="KW-0479">Metal-binding</keyword>
<keyword id="KW-0539">Nucleus</keyword>
<keyword id="KW-1185">Reference proteome</keyword>
<keyword id="KW-0678">Repressor</keyword>
<keyword id="KW-0804">Transcription</keyword>
<keyword id="KW-0805">Transcription regulation</keyword>
<keyword id="KW-0832">Ubl conjugation</keyword>
<keyword id="KW-0862">Zinc</keyword>
<keyword id="KW-0863">Zinc-finger</keyword>
<sequence length="117" mass="13121">MALETVPKDLRHLRACLLCSLVKTIDQFEYDGCDNCDAYLQMKGNREMVYDCTSSSFDGIIAMMSPGDSWVSKWQRVSNFKPGVYAVSVTGRLPQGIVRELKSRGVAYKSRDTAIKT</sequence>
<comment type="function">
    <text evidence="1">Component of the DRB sensitivity-inducing factor complex (DSIF complex), which regulates mRNA processing and transcription elongation by RNA polymerase II. DSIF positively regulates mRNA capping by stimulating the mRNA guanylyltransferase activity of RNGTT/CAP1A. DSIF also acts cooperatively with the negative elongation factor complex (NELF complex) to enhance transcriptional pausing at sites proximal to the promoter. Transcriptional pausing may facilitate the assembly of an elongation competent RNA polymerase II complex. DSIF and NELF promote pausing by inhibition of the transcription elongation factor TFIIS/S-II. TFIIS/S-II binds to RNA polymerase II at transcription pause sites and stimulates the weak intrinsic nuclease activity of the enzyme. Cleavage of blocked transcripts by RNA polymerase II promotes the resumption of transcription from the new 3' terminus and may allow repeated attempts at transcription through natural pause sites (By similarity).</text>
</comment>
<comment type="subunit">
    <text evidence="1">Interacts with SUPT5H to form DSIF. DSIF interacts with the positive transcription elongation factor b complex (P-TEFb complex), which is composed of CDK9 and cyclin-T (CCNT1 or CCNT2). DSIF interacts with RNA polymerase II, and this interaction is reduced by phosphorylation of the C-terminal domain (CTD) of POLR2A by P-TEFb. DSIF also interacts with the NELF complex, which is composed of NELFA, NELFB, NELFD and NELFE, and this interaction occurs following prior binding of DSIF to RNA polymerase II. DSIF also interacts with PRMT1/HRMT1L2, TATSF1, RNGTT/CAP1A, PRMT5/SKB1, SUPT6H, and can interact with PIN1 (By similarity).</text>
</comment>
<comment type="subcellular location">
    <subcellularLocation>
        <location evidence="1">Nucleus</location>
    </subcellularLocation>
</comment>
<comment type="PTM">
    <text evidence="2">Ubiquitinated by UBR5 when not assembled in the DSIF complex, leading to its degradation: UBR5 recognizes and binds a degron that is not accessible when SUPT4H1 is part of the DSIF complex.</text>
</comment>
<comment type="similarity">
    <text evidence="4">Belongs to the SPT4 family.</text>
</comment>
<accession>Q5RFH5</accession>
<gene>
    <name type="primary">SUPT4H1</name>
</gene>
<evidence type="ECO:0000250" key="1"/>
<evidence type="ECO:0000250" key="2">
    <source>
        <dbReference type="UniProtKB" id="P63272"/>
    </source>
</evidence>
<evidence type="ECO:0000255" key="3"/>
<evidence type="ECO:0000305" key="4"/>